<evidence type="ECO:0000250" key="1"/>
<evidence type="ECO:0000250" key="2">
    <source>
        <dbReference type="UniProtKB" id="P34998"/>
    </source>
</evidence>
<evidence type="ECO:0000255" key="3"/>
<evidence type="ECO:0000269" key="4">
    <source>
    </source>
</evidence>
<evidence type="ECO:0000269" key="5">
    <source>
    </source>
</evidence>
<evidence type="ECO:0000269" key="6">
    <source>
    </source>
</evidence>
<evidence type="ECO:0000305" key="7"/>
<organism>
    <name type="scientific">Mus musculus</name>
    <name type="common">Mouse</name>
    <dbReference type="NCBI Taxonomy" id="10090"/>
    <lineage>
        <taxon>Eukaryota</taxon>
        <taxon>Metazoa</taxon>
        <taxon>Chordata</taxon>
        <taxon>Craniata</taxon>
        <taxon>Vertebrata</taxon>
        <taxon>Euteleostomi</taxon>
        <taxon>Mammalia</taxon>
        <taxon>Eutheria</taxon>
        <taxon>Euarchontoglires</taxon>
        <taxon>Glires</taxon>
        <taxon>Rodentia</taxon>
        <taxon>Myomorpha</taxon>
        <taxon>Muroidea</taxon>
        <taxon>Muridae</taxon>
        <taxon>Murinae</taxon>
        <taxon>Mus</taxon>
        <taxon>Mus</taxon>
    </lineage>
</organism>
<keyword id="KW-1003">Cell membrane</keyword>
<keyword id="KW-1015">Disulfide bond</keyword>
<keyword id="KW-0967">Endosome</keyword>
<keyword id="KW-0297">G-protein coupled receptor</keyword>
<keyword id="KW-0325">Glycoprotein</keyword>
<keyword id="KW-0472">Membrane</keyword>
<keyword id="KW-0597">Phosphoprotein</keyword>
<keyword id="KW-0675">Receptor</keyword>
<keyword id="KW-1185">Reference proteome</keyword>
<keyword id="KW-0732">Signal</keyword>
<keyword id="KW-0807">Transducer</keyword>
<keyword id="KW-0812">Transmembrane</keyword>
<keyword id="KW-1133">Transmembrane helix</keyword>
<accession>P35347</accession>
<name>CRFR1_MOUSE</name>
<dbReference type="EMBL" id="X72305">
    <property type="protein sequence ID" value="CAA51053.1"/>
    <property type="molecule type" value="mRNA"/>
</dbReference>
<dbReference type="EMBL" id="AF483484">
    <property type="protein sequence ID" value="AAL90758.1"/>
    <property type="molecule type" value="mRNA"/>
</dbReference>
<dbReference type="EMBL" id="AF483485">
    <property type="protein sequence ID" value="AAL90759.1"/>
    <property type="molecule type" value="mRNA"/>
</dbReference>
<dbReference type="CCDS" id="CCDS25526.1"/>
<dbReference type="PIR" id="S39535">
    <property type="entry name" value="S39535"/>
</dbReference>
<dbReference type="RefSeq" id="NP_031788.1">
    <property type="nucleotide sequence ID" value="NM_007762.5"/>
</dbReference>
<dbReference type="SMR" id="P35347"/>
<dbReference type="CORUM" id="P35347"/>
<dbReference type="FunCoup" id="P35347">
    <property type="interactions" value="631"/>
</dbReference>
<dbReference type="IntAct" id="P35347">
    <property type="interactions" value="6"/>
</dbReference>
<dbReference type="MINT" id="P35347"/>
<dbReference type="STRING" id="10090.ENSMUSP00000091455"/>
<dbReference type="BindingDB" id="P35347"/>
<dbReference type="ChEMBL" id="CHEMBL2446"/>
<dbReference type="GlyCosmos" id="P35347">
    <property type="glycosylation" value="5 sites, No reported glycans"/>
</dbReference>
<dbReference type="GlyGen" id="P35347">
    <property type="glycosylation" value="5 sites, 3 N-linked glycans (3 sites)"/>
</dbReference>
<dbReference type="iPTMnet" id="P35347"/>
<dbReference type="PhosphoSitePlus" id="P35347"/>
<dbReference type="PaxDb" id="10090-ENSMUSP00000091455"/>
<dbReference type="ProteomicsDB" id="284136"/>
<dbReference type="DNASU" id="12921"/>
<dbReference type="Ensembl" id="ENSMUST00000093925.5">
    <property type="protein sequence ID" value="ENSMUSP00000091455.5"/>
    <property type="gene ID" value="ENSMUSG00000018634.11"/>
</dbReference>
<dbReference type="GeneID" id="12921"/>
<dbReference type="KEGG" id="mmu:12921"/>
<dbReference type="UCSC" id="uc007lvz.1">
    <property type="organism name" value="mouse"/>
</dbReference>
<dbReference type="AGR" id="MGI:88498"/>
<dbReference type="CTD" id="1394"/>
<dbReference type="MGI" id="MGI:88498">
    <property type="gene designation" value="Crhr1"/>
</dbReference>
<dbReference type="VEuPathDB" id="HostDB:ENSMUSG00000018634"/>
<dbReference type="eggNOG" id="KOG4564">
    <property type="taxonomic scope" value="Eukaryota"/>
</dbReference>
<dbReference type="GeneTree" id="ENSGT00940000158410"/>
<dbReference type="HOGENOM" id="CLU_002753_4_1_1"/>
<dbReference type="InParanoid" id="P35347"/>
<dbReference type="OMA" id="PQCNALV"/>
<dbReference type="OrthoDB" id="6022368at2759"/>
<dbReference type="PhylomeDB" id="P35347"/>
<dbReference type="TreeFam" id="TF315710"/>
<dbReference type="Reactome" id="R-MMU-373080">
    <property type="pathway name" value="Class B/2 (Secretin family receptors)"/>
</dbReference>
<dbReference type="Reactome" id="R-MMU-418555">
    <property type="pathway name" value="G alpha (s) signalling events"/>
</dbReference>
<dbReference type="BioGRID-ORCS" id="12921">
    <property type="hits" value="4 hits in 75 CRISPR screens"/>
</dbReference>
<dbReference type="PHI-base" id="PHI:4676"/>
<dbReference type="PRO" id="PR:P35347"/>
<dbReference type="Proteomes" id="UP000000589">
    <property type="component" value="Chromosome 11"/>
</dbReference>
<dbReference type="RNAct" id="P35347">
    <property type="molecule type" value="protein"/>
</dbReference>
<dbReference type="Bgee" id="ENSMUSG00000018634">
    <property type="expression patterns" value="Expressed in cerebellar cortex and 64 other cell types or tissues"/>
</dbReference>
<dbReference type="ExpressionAtlas" id="P35347">
    <property type="expression patterns" value="baseline and differential"/>
</dbReference>
<dbReference type="GO" id="GO:0005768">
    <property type="term" value="C:endosome"/>
    <property type="evidence" value="ECO:0007669"/>
    <property type="project" value="UniProtKB-SubCell"/>
</dbReference>
<dbReference type="GO" id="GO:0098978">
    <property type="term" value="C:glutamatergic synapse"/>
    <property type="evidence" value="ECO:0000314"/>
    <property type="project" value="SynGO"/>
</dbReference>
<dbReference type="GO" id="GO:0005886">
    <property type="term" value="C:plasma membrane"/>
    <property type="evidence" value="ECO:0000250"/>
    <property type="project" value="UniProtKB"/>
</dbReference>
<dbReference type="GO" id="GO:0098839">
    <property type="term" value="C:postsynaptic density membrane"/>
    <property type="evidence" value="ECO:0000314"/>
    <property type="project" value="SynGO"/>
</dbReference>
<dbReference type="GO" id="GO:0015056">
    <property type="term" value="F:corticotrophin-releasing factor receptor activity"/>
    <property type="evidence" value="ECO:0000315"/>
    <property type="project" value="UniProtKB"/>
</dbReference>
<dbReference type="GO" id="GO:0007189">
    <property type="term" value="P:adenylate cyclase-activating G protein-coupled receptor signaling pathway"/>
    <property type="evidence" value="ECO:0000315"/>
    <property type="project" value="UniProtKB"/>
</dbReference>
<dbReference type="GO" id="GO:0030325">
    <property type="term" value="P:adrenal gland development"/>
    <property type="evidence" value="ECO:0000315"/>
    <property type="project" value="UniProtKB"/>
</dbReference>
<dbReference type="GO" id="GO:0048149">
    <property type="term" value="P:behavioral response to ethanol"/>
    <property type="evidence" value="ECO:0000315"/>
    <property type="project" value="MGI"/>
</dbReference>
<dbReference type="GO" id="GO:0007166">
    <property type="term" value="P:cell surface receptor signaling pathway"/>
    <property type="evidence" value="ECO:0007669"/>
    <property type="project" value="InterPro"/>
</dbReference>
<dbReference type="GO" id="GO:0071376">
    <property type="term" value="P:cellular response to corticotropin-releasing hormone stimulus"/>
    <property type="evidence" value="ECO:0000315"/>
    <property type="project" value="UniProtKB"/>
</dbReference>
<dbReference type="GO" id="GO:0051458">
    <property type="term" value="P:corticotropin secretion"/>
    <property type="evidence" value="ECO:0000315"/>
    <property type="project" value="UniProtKB"/>
</dbReference>
<dbReference type="GO" id="GO:0035640">
    <property type="term" value="P:exploration behavior"/>
    <property type="evidence" value="ECO:0000315"/>
    <property type="project" value="MGI"/>
</dbReference>
<dbReference type="GO" id="GO:0042596">
    <property type="term" value="P:fear response"/>
    <property type="evidence" value="ECO:0000315"/>
    <property type="project" value="UniProtKB"/>
</dbReference>
<dbReference type="GO" id="GO:0051867">
    <property type="term" value="P:general adaptation syndrome, behavioral process"/>
    <property type="evidence" value="ECO:0000315"/>
    <property type="project" value="MGI"/>
</dbReference>
<dbReference type="GO" id="GO:2000852">
    <property type="term" value="P:regulation of corticosterone secretion"/>
    <property type="evidence" value="ECO:0000315"/>
    <property type="project" value="UniProtKB"/>
</dbReference>
<dbReference type="CDD" id="cd15445">
    <property type="entry name" value="7tmB1_CRF-R1"/>
    <property type="match status" value="1"/>
</dbReference>
<dbReference type="FunFam" id="1.20.1070.10:FF:000021">
    <property type="entry name" value="Corticotropin releasing factor receptor 2"/>
    <property type="match status" value="1"/>
</dbReference>
<dbReference type="FunFam" id="4.10.1240.10:FF:000007">
    <property type="entry name" value="Corticotropin-releasing factor receptor 1"/>
    <property type="match status" value="1"/>
</dbReference>
<dbReference type="Gene3D" id="4.10.1240.10">
    <property type="entry name" value="GPCR, family 2, extracellular hormone receptor domain"/>
    <property type="match status" value="1"/>
</dbReference>
<dbReference type="Gene3D" id="1.20.1070.10">
    <property type="entry name" value="Rhodopsin 7-helix transmembrane proteins"/>
    <property type="match status" value="1"/>
</dbReference>
<dbReference type="InterPro" id="IPR050332">
    <property type="entry name" value="GPCR_2"/>
</dbReference>
<dbReference type="InterPro" id="IPR017981">
    <property type="entry name" value="GPCR_2-like_7TM"/>
</dbReference>
<dbReference type="InterPro" id="IPR003052">
    <property type="entry name" value="GPCR_2_CRF1_rcpt"/>
</dbReference>
<dbReference type="InterPro" id="IPR003051">
    <property type="entry name" value="GPCR_2_CRF_rcpt"/>
</dbReference>
<dbReference type="InterPro" id="IPR036445">
    <property type="entry name" value="GPCR_2_extracell_dom_sf"/>
</dbReference>
<dbReference type="InterPro" id="IPR001879">
    <property type="entry name" value="GPCR_2_extracellular_dom"/>
</dbReference>
<dbReference type="InterPro" id="IPR000832">
    <property type="entry name" value="GPCR_2_secretin-like"/>
</dbReference>
<dbReference type="InterPro" id="IPR017983">
    <property type="entry name" value="GPCR_2_secretin-like_CS"/>
</dbReference>
<dbReference type="PANTHER" id="PTHR45620:SF2">
    <property type="entry name" value="CORTICOTROPIN-RELEASING FACTOR RECEPTOR 1"/>
    <property type="match status" value="1"/>
</dbReference>
<dbReference type="PANTHER" id="PTHR45620">
    <property type="entry name" value="PDF RECEPTOR-LIKE PROTEIN-RELATED"/>
    <property type="match status" value="1"/>
</dbReference>
<dbReference type="Pfam" id="PF00002">
    <property type="entry name" value="7tm_2"/>
    <property type="match status" value="1"/>
</dbReference>
<dbReference type="Pfam" id="PF02793">
    <property type="entry name" value="HRM"/>
    <property type="match status" value="1"/>
</dbReference>
<dbReference type="PRINTS" id="PR01279">
    <property type="entry name" value="CRFRECEPTOR"/>
</dbReference>
<dbReference type="PRINTS" id="PR01280">
    <property type="entry name" value="CRFRECEPTOR1"/>
</dbReference>
<dbReference type="PRINTS" id="PR00249">
    <property type="entry name" value="GPCRSECRETIN"/>
</dbReference>
<dbReference type="SMART" id="SM00008">
    <property type="entry name" value="HormR"/>
    <property type="match status" value="1"/>
</dbReference>
<dbReference type="SUPFAM" id="SSF81321">
    <property type="entry name" value="Family A G protein-coupled receptor-like"/>
    <property type="match status" value="1"/>
</dbReference>
<dbReference type="SUPFAM" id="SSF111418">
    <property type="entry name" value="Hormone receptor domain"/>
    <property type="match status" value="1"/>
</dbReference>
<dbReference type="PROSITE" id="PS00649">
    <property type="entry name" value="G_PROTEIN_RECEP_F2_1"/>
    <property type="match status" value="1"/>
</dbReference>
<dbReference type="PROSITE" id="PS00650">
    <property type="entry name" value="G_PROTEIN_RECEP_F2_2"/>
    <property type="match status" value="1"/>
</dbReference>
<dbReference type="PROSITE" id="PS50227">
    <property type="entry name" value="G_PROTEIN_RECEP_F2_3"/>
    <property type="match status" value="1"/>
</dbReference>
<dbReference type="PROSITE" id="PS50261">
    <property type="entry name" value="G_PROTEIN_RECEP_F2_4"/>
    <property type="match status" value="1"/>
</dbReference>
<gene>
    <name type="primary">Crhr1</name>
    <name type="synonym">Crhr</name>
</gene>
<proteinExistence type="evidence at protein level"/>
<sequence>MGQRPQLRLVKALLLLGLNPVSTSLQDQQCESLSLASNVSGLQCNASVDLIGTCWPRSPAGQLVVRPCPAFFYGVRYNTTNNGYRECLANGSWAARVNYSECQEILNEEKKSKVHYHIAVIINYLGHCISLVALLVAFVLFLRLRSIRCLRNIIHWNLISAFILRNATWFVVQLTVSPEVHQSNVAWCRLVTAAYNYFHVTNFFWMFGEGCYLHTAIVLTYSTDRLRKWMFVCIGWGVPFPIIVAWAIGKLYYDNEKCWFGKRPGVYTDYIYQGPMILVLLINFIFLFNIVRILMTKLRASTTSETIQYRKAVKATLVLLPLLGITYMLFFVNPGEDEVSRVVFIYFNSFLESFQGFFVSVFYCFLNSEVRSAIRKRWRRWQDKHSIRARVARAMSIPTSPTRVSFHSIKQSTAV</sequence>
<comment type="function">
    <text evidence="5 6">G-protein coupled receptor for CRH (corticotropin-releasing factor) and UCN (urocortin). Has high affinity for CRH and UCN. Ligand binding causes a conformation change that triggers signaling via guanine nucleotide-binding proteins (G proteins) and down-stream effectors, such as adenylate cyclase. Promotes the activation of adenylate cyclase, leading to increased intracellular cAMP levels. Inhibits the activity of the calcium channel CACNA1H. Required for normal embryonic development of the adrenal gland and for normal hormonal responses to stress. Plays a role in the response to anxiogenic stimuli.</text>
</comment>
<comment type="subunit">
    <text evidence="1 4">Heterodimer; heterodimerizes with GPER1 (By similarity). Interacts (via N-terminal extracellular domain) with CRH and UCN. Interacts with DLG1; this inhibits endocytosis of CRHR1 after agonist binding.</text>
</comment>
<comment type="interaction">
    <interactant intactId="EBI-16879653">
        <id>P35347</id>
    </interactant>
    <interactant intactId="EBI-396969">
        <id>P70175</id>
        <label>Dlg3</label>
    </interactant>
    <organismsDiffer>false</organismsDiffer>
    <experiments>3</experiments>
</comment>
<comment type="interaction">
    <interactant intactId="EBI-16879653">
        <id>P35347</id>
    </interactant>
    <interactant intactId="EBI-300895">
        <id>Q62108</id>
        <label>Dlg4</label>
    </interactant>
    <organismsDiffer>false</organismsDiffer>
    <experiments>7</experiments>
</comment>
<comment type="interaction">
    <interactant intactId="EBI-16879653">
        <id>P35347</id>
    </interactant>
    <interactant intactId="EBI-389325">
        <id>Q62696</id>
        <label>Dlg1</label>
    </interactant>
    <organismsDiffer>true</organismsDiffer>
    <experiments>3</experiments>
</comment>
<comment type="subcellular location">
    <subcellularLocation>
        <location evidence="5">Cell membrane</location>
        <topology evidence="5">Multi-pass membrane protein</topology>
    </subcellularLocation>
    <subcellularLocation>
        <location evidence="1">Endosome</location>
    </subcellularLocation>
    <text evidence="1">Agonist-binding promotes endocytosis.</text>
</comment>
<comment type="tissue specificity">
    <text evidence="4">Detected in brain cortex (at protein level).</text>
</comment>
<comment type="domain">
    <text evidence="1">The transmembrane domain is composed of seven transmembrane helices that are arranged in V-shape. Transmembrane helix 7 assumes a sharply kinked structure (By similarity).</text>
</comment>
<comment type="PTM">
    <text>C-terminal Ser or Thr residues may be phosphorylated.</text>
</comment>
<comment type="PTM">
    <text evidence="1">Phosphorylation at Ser-301 by PKA prevents maximal coupling to Gq-protein, and thereby negatively regulates downstream signaling.</text>
</comment>
<comment type="disruption phenotype">
    <text evidence="6">Heterozygous mice are fertile and produce homozygous pups at the expected Mendelian rate, but about 15% of the homozygous males die between 3 and 12 weeks after birth. Mice are deficient in CRF-mediated secretion of ACTH and show no increase in intracellular cAMP levels in response to CRF. Mice display a marked decrease in the size of the zona fasciculata of the adrenal gland, where corticosterone is produced, and have very low plasma corticosterone levels. Mutant mice display reduced anxiety. They fail to produce increased levels of ACTH and corticosterone in response to stress, contrary to wild type mice. Homozygous mice are fertile, but almost all of the pups die within 48 hours after birth, due to defects in lung inflation and alveolar collapse. Treatment of pregnant females with corticosterone-containing drinking water results in normal lung maturation and normal survival of their progeny.</text>
</comment>
<comment type="similarity">
    <text evidence="7">Belongs to the G-protein coupled receptor 2 family.</text>
</comment>
<feature type="signal peptide" evidence="3">
    <location>
        <begin position="1"/>
        <end position="23"/>
    </location>
</feature>
<feature type="chain" id="PRO_0000012815" description="Corticotropin-releasing factor receptor 1">
    <location>
        <begin position="24"/>
        <end position="415"/>
    </location>
</feature>
<feature type="topological domain" description="Extracellular" evidence="1">
    <location>
        <begin position="24"/>
        <end position="111"/>
    </location>
</feature>
<feature type="transmembrane region" description="Helical; Name=1" evidence="1">
    <location>
        <begin position="112"/>
        <end position="142"/>
    </location>
</feature>
<feature type="topological domain" description="Cytoplasmic" evidence="1">
    <location>
        <begin position="143"/>
        <end position="149"/>
    </location>
</feature>
<feature type="transmembrane region" description="Helical; Name=2" evidence="1">
    <location>
        <begin position="150"/>
        <end position="174"/>
    </location>
</feature>
<feature type="topological domain" description="Extracellular" evidence="1">
    <location>
        <begin position="175"/>
        <end position="189"/>
    </location>
</feature>
<feature type="transmembrane region" description="Helical; Name=3" evidence="1">
    <location>
        <begin position="190"/>
        <end position="218"/>
    </location>
</feature>
<feature type="topological domain" description="Cytoplasmic" evidence="1">
    <location>
        <begin position="219"/>
        <end position="225"/>
    </location>
</feature>
<feature type="transmembrane region" description="Helical; Name=4" evidence="1">
    <location>
        <begin position="226"/>
        <end position="253"/>
    </location>
</feature>
<feature type="topological domain" description="Extracellular" evidence="1">
    <location>
        <begin position="254"/>
        <end position="269"/>
    </location>
</feature>
<feature type="transmembrane region" description="Helical; Name=5" evidence="1">
    <location>
        <begin position="270"/>
        <end position="295"/>
    </location>
</feature>
<feature type="topological domain" description="Cytoplasmic" evidence="1">
    <location>
        <begin position="296"/>
        <end position="306"/>
    </location>
</feature>
<feature type="transmembrane region" description="Helical; Name=6" evidence="1">
    <location>
        <begin position="307"/>
        <end position="331"/>
    </location>
</feature>
<feature type="topological domain" description="Extracellular" evidence="1">
    <location>
        <begin position="332"/>
        <end position="338"/>
    </location>
</feature>
<feature type="transmembrane region" description="Helical; Name=7" evidence="1">
    <location>
        <begin position="339"/>
        <end position="368"/>
    </location>
</feature>
<feature type="topological domain" description="Cytoplasmic" evidence="1">
    <location>
        <begin position="369"/>
        <end position="415"/>
    </location>
</feature>
<feature type="region of interest" description="Important for peptide agonist binding" evidence="1">
    <location>
        <begin position="99"/>
        <end position="108"/>
    </location>
</feature>
<feature type="region of interest" description="Important for antagonist binding" evidence="1">
    <location>
        <begin position="280"/>
        <end position="290"/>
    </location>
</feature>
<feature type="modified residue" description="Phosphoserine; by PKA" evidence="2">
    <location>
        <position position="301"/>
    </location>
</feature>
<feature type="glycosylation site" description="N-linked (GlcNAc...) asparagine" evidence="3">
    <location>
        <position position="38"/>
    </location>
</feature>
<feature type="glycosylation site" description="N-linked (GlcNAc...) asparagine" evidence="3">
    <location>
        <position position="45"/>
    </location>
</feature>
<feature type="glycosylation site" description="N-linked (GlcNAc...) asparagine" evidence="3">
    <location>
        <position position="78"/>
    </location>
</feature>
<feature type="glycosylation site" description="N-linked (GlcNAc...) asparagine" evidence="3">
    <location>
        <position position="90"/>
    </location>
</feature>
<feature type="glycosylation site" description="N-linked (GlcNAc...) asparagine" evidence="3">
    <location>
        <position position="98"/>
    </location>
</feature>
<feature type="disulfide bond" evidence="1">
    <location>
        <begin position="30"/>
        <end position="54"/>
    </location>
</feature>
<feature type="disulfide bond" evidence="1">
    <location>
        <begin position="44"/>
        <end position="87"/>
    </location>
</feature>
<feature type="disulfide bond" evidence="1">
    <location>
        <begin position="68"/>
        <end position="102"/>
    </location>
</feature>
<feature type="disulfide bond" evidence="1">
    <location>
        <begin position="188"/>
        <end position="258"/>
    </location>
</feature>
<protein>
    <recommendedName>
        <fullName>Corticotropin-releasing factor receptor 1</fullName>
        <shortName>CRF-R-1</shortName>
        <shortName>CRF-R1</shortName>
        <shortName>CRFR-1</shortName>
    </recommendedName>
    <alternativeName>
        <fullName>Corticotropin-releasing hormone receptor 1</fullName>
        <shortName>CRH-R-1</shortName>
        <shortName>CRH-R1</shortName>
    </alternativeName>
</protein>
<reference key="1">
    <citation type="journal article" date="1993" name="FEBS Lett.">
        <title>Primary structure and functional expression of mouse pituitary and human brain corticotrophin releasing factor receptors.</title>
        <authorList>
            <person name="Vita N."/>
            <person name="Laurent P."/>
            <person name="Lefort S."/>
            <person name="Chalon P."/>
            <person name="Lelias J.-M."/>
            <person name="Kaghad M."/>
            <person name="le Fur G."/>
            <person name="Caput D."/>
            <person name="Ferrara P."/>
        </authorList>
    </citation>
    <scope>NUCLEOTIDE SEQUENCE [MRNA]</scope>
    <scope>FUNCTION</scope>
    <scope>SUBCELLULAR LOCATION</scope>
    <source>
        <tissue>Pituitary</tissue>
    </source>
</reference>
<reference key="2">
    <citation type="journal article" date="2001" name="Mamm. Genome">
        <title>High-throughput sequence identification of gene coding variants within alcohol-related QTLs.</title>
        <authorList>
            <person name="Ehringer M.A."/>
            <person name="Thompson J."/>
            <person name="Conroy O."/>
            <person name="Xu Y."/>
            <person name="Yang F."/>
            <person name="Canniff J."/>
            <person name="Beeson M."/>
            <person name="Gordon L."/>
            <person name="Bennett B."/>
            <person name="Johnson T.E."/>
            <person name="Sikela J.M."/>
        </authorList>
    </citation>
    <scope>NUCLEOTIDE SEQUENCE [MRNA]</scope>
    <source>
        <strain>ILS</strain>
        <strain>ISS</strain>
    </source>
</reference>
<reference key="3">
    <citation type="journal article" date="1998" name="Neuron">
        <title>Corticotropin releasing factor receptor 1-deficient mice display decreased anxiety, impaired stress response, and aberrant neuroendocrine development.</title>
        <authorList>
            <person name="Smith G.W."/>
            <person name="Aubry J.M."/>
            <person name="Dellu F."/>
            <person name="Contarino A."/>
            <person name="Bilezikjian L.M."/>
            <person name="Gold L.H."/>
            <person name="Chen R."/>
            <person name="Marchuk Y."/>
            <person name="Hauser C."/>
            <person name="Bentley C.A."/>
            <person name="Sawchenko P.E."/>
            <person name="Koob G.F."/>
            <person name="Vale W."/>
            <person name="Lee K.F."/>
        </authorList>
    </citation>
    <scope>DISRUPTION PHENOTYPE</scope>
    <scope>FUNCTION</scope>
</reference>
<reference key="4">
    <citation type="journal article" date="2013" name="J. Biol. Chem.">
        <title>Role of SAP97 protein in the regulation of corticotropin-releasing factor receptor 1 endocytosis and extracellular signal-regulated kinase 1/2 signaling.</title>
        <authorList>
            <person name="Dunn H.A."/>
            <person name="Walther C."/>
            <person name="Godin C.M."/>
            <person name="Hall R.A."/>
            <person name="Ferguson S.S."/>
        </authorList>
    </citation>
    <scope>INTERACTION WITH DLG1</scope>
    <scope>TISSUE SPECIFICITY</scope>
</reference>